<comment type="function">
    <text evidence="1">Part of the high-affinity ATP-driven potassium transport (or Kdp) system, which catalyzes the hydrolysis of ATP coupled with the electrogenic transport of potassium into the cytoplasm. This subunit acts as a catalytic chaperone that increases the ATP-binding affinity of the ATP-hydrolyzing subunit KdpB by the formation of a transient KdpB/KdpC/ATP ternary complex.</text>
</comment>
<comment type="subunit">
    <text evidence="1">The system is composed of three essential subunits: KdpA, KdpB and KdpC.</text>
</comment>
<comment type="subcellular location">
    <subcellularLocation>
        <location evidence="1">Cell inner membrane</location>
        <topology evidence="1">Single-pass membrane protein</topology>
    </subcellularLocation>
</comment>
<comment type="similarity">
    <text evidence="1">Belongs to the KdpC family.</text>
</comment>
<evidence type="ECO:0000255" key="1">
    <source>
        <dbReference type="HAMAP-Rule" id="MF_00276"/>
    </source>
</evidence>
<dbReference type="EMBL" id="CP000113">
    <property type="protein sequence ID" value="ABF91913.1"/>
    <property type="molecule type" value="Genomic_DNA"/>
</dbReference>
<dbReference type="RefSeq" id="WP_011550313.1">
    <property type="nucleotide sequence ID" value="NC_008095.1"/>
</dbReference>
<dbReference type="SMR" id="Q1DFX4"/>
<dbReference type="STRING" id="246197.MXAN_0166"/>
<dbReference type="EnsemblBacteria" id="ABF91913">
    <property type="protein sequence ID" value="ABF91913"/>
    <property type="gene ID" value="MXAN_0166"/>
</dbReference>
<dbReference type="GeneID" id="41357669"/>
<dbReference type="KEGG" id="mxa:MXAN_0166"/>
<dbReference type="eggNOG" id="COG2156">
    <property type="taxonomic scope" value="Bacteria"/>
</dbReference>
<dbReference type="HOGENOM" id="CLU_077094_2_0_7"/>
<dbReference type="OrthoDB" id="9788285at2"/>
<dbReference type="Proteomes" id="UP000002402">
    <property type="component" value="Chromosome"/>
</dbReference>
<dbReference type="GO" id="GO:0005886">
    <property type="term" value="C:plasma membrane"/>
    <property type="evidence" value="ECO:0007669"/>
    <property type="project" value="UniProtKB-SubCell"/>
</dbReference>
<dbReference type="GO" id="GO:0005524">
    <property type="term" value="F:ATP binding"/>
    <property type="evidence" value="ECO:0007669"/>
    <property type="project" value="UniProtKB-UniRule"/>
</dbReference>
<dbReference type="GO" id="GO:0008556">
    <property type="term" value="F:P-type potassium transmembrane transporter activity"/>
    <property type="evidence" value="ECO:0007669"/>
    <property type="project" value="InterPro"/>
</dbReference>
<dbReference type="HAMAP" id="MF_00276">
    <property type="entry name" value="KdpC"/>
    <property type="match status" value="1"/>
</dbReference>
<dbReference type="InterPro" id="IPR003820">
    <property type="entry name" value="KdpC"/>
</dbReference>
<dbReference type="NCBIfam" id="TIGR00681">
    <property type="entry name" value="kdpC"/>
    <property type="match status" value="1"/>
</dbReference>
<dbReference type="NCBIfam" id="NF001454">
    <property type="entry name" value="PRK00315.1"/>
    <property type="match status" value="1"/>
</dbReference>
<dbReference type="PANTHER" id="PTHR30042">
    <property type="entry name" value="POTASSIUM-TRANSPORTING ATPASE C CHAIN"/>
    <property type="match status" value="1"/>
</dbReference>
<dbReference type="PANTHER" id="PTHR30042:SF2">
    <property type="entry name" value="POTASSIUM-TRANSPORTING ATPASE KDPC SUBUNIT"/>
    <property type="match status" value="1"/>
</dbReference>
<dbReference type="Pfam" id="PF02669">
    <property type="entry name" value="KdpC"/>
    <property type="match status" value="1"/>
</dbReference>
<dbReference type="PIRSF" id="PIRSF001296">
    <property type="entry name" value="K_ATPase_KdpC"/>
    <property type="match status" value="1"/>
</dbReference>
<gene>
    <name evidence="1" type="primary">kdpC</name>
    <name type="ordered locus">MXAN_0166</name>
</gene>
<name>KDPC_MYXXD</name>
<reference key="1">
    <citation type="journal article" date="2006" name="Proc. Natl. Acad. Sci. U.S.A.">
        <title>Evolution of sensory complexity recorded in a myxobacterial genome.</title>
        <authorList>
            <person name="Goldman B.S."/>
            <person name="Nierman W.C."/>
            <person name="Kaiser D."/>
            <person name="Slater S.C."/>
            <person name="Durkin A.S."/>
            <person name="Eisen J.A."/>
            <person name="Ronning C.M."/>
            <person name="Barbazuk W.B."/>
            <person name="Blanchard M."/>
            <person name="Field C."/>
            <person name="Halling C."/>
            <person name="Hinkle G."/>
            <person name="Iartchuk O."/>
            <person name="Kim H.S."/>
            <person name="Mackenzie C."/>
            <person name="Madupu R."/>
            <person name="Miller N."/>
            <person name="Shvartsbeyn A."/>
            <person name="Sullivan S.A."/>
            <person name="Vaudin M."/>
            <person name="Wiegand R."/>
            <person name="Kaplan H.B."/>
        </authorList>
    </citation>
    <scope>NUCLEOTIDE SEQUENCE [LARGE SCALE GENOMIC DNA]</scope>
    <source>
        <strain>DK1622</strain>
    </source>
</reference>
<sequence>MFSTFLTALRTCVVTMVLTGLLYPLAVTGLAQLLFPGEANGSWVKDGRGRVVGSALIGQGFTRAGYFHPRPSAAGAGYDGAASSGSNLGPTSLKLKERAAAELERLRRENPDAAGPVPAELVTTSASGLDPHLSPEAARWQAARVARARGVALERVLDVVDARVEGRTFGVLGEPRVNVLLLNLALDRRFGPLPDAAPGVGGRASPGQGAP</sequence>
<accession>Q1DFX4</accession>
<keyword id="KW-0067">ATP-binding</keyword>
<keyword id="KW-0997">Cell inner membrane</keyword>
<keyword id="KW-1003">Cell membrane</keyword>
<keyword id="KW-0406">Ion transport</keyword>
<keyword id="KW-0472">Membrane</keyword>
<keyword id="KW-0547">Nucleotide-binding</keyword>
<keyword id="KW-0630">Potassium</keyword>
<keyword id="KW-0633">Potassium transport</keyword>
<keyword id="KW-1185">Reference proteome</keyword>
<keyword id="KW-0812">Transmembrane</keyword>
<keyword id="KW-1133">Transmembrane helix</keyword>
<keyword id="KW-0813">Transport</keyword>
<organism>
    <name type="scientific">Myxococcus xanthus (strain DK1622)</name>
    <dbReference type="NCBI Taxonomy" id="246197"/>
    <lineage>
        <taxon>Bacteria</taxon>
        <taxon>Pseudomonadati</taxon>
        <taxon>Myxococcota</taxon>
        <taxon>Myxococcia</taxon>
        <taxon>Myxococcales</taxon>
        <taxon>Cystobacterineae</taxon>
        <taxon>Myxococcaceae</taxon>
        <taxon>Myxococcus</taxon>
    </lineage>
</organism>
<proteinExistence type="inferred from homology"/>
<feature type="chain" id="PRO_1000022297" description="Potassium-transporting ATPase KdpC subunit">
    <location>
        <begin position="1"/>
        <end position="211"/>
    </location>
</feature>
<feature type="transmembrane region" description="Helical" evidence="1">
    <location>
        <begin position="13"/>
        <end position="35"/>
    </location>
</feature>
<protein>
    <recommendedName>
        <fullName evidence="1">Potassium-transporting ATPase KdpC subunit</fullName>
    </recommendedName>
    <alternativeName>
        <fullName evidence="1">ATP phosphohydrolase [potassium-transporting] C chain</fullName>
    </alternativeName>
    <alternativeName>
        <fullName evidence="1">Potassium-binding and translocating subunit C</fullName>
    </alternativeName>
    <alternativeName>
        <fullName evidence="1">Potassium-translocating ATPase C chain</fullName>
    </alternativeName>
</protein>